<name>PYRI_SALHS</name>
<comment type="function">
    <text evidence="1">Involved in allosteric regulation of aspartate carbamoyltransferase.</text>
</comment>
<comment type="cofactor">
    <cofactor evidence="1">
        <name>Zn(2+)</name>
        <dbReference type="ChEBI" id="CHEBI:29105"/>
    </cofactor>
    <text evidence="1">Binds 1 zinc ion per subunit.</text>
</comment>
<comment type="subunit">
    <text evidence="1">Contains catalytic and regulatory chains.</text>
</comment>
<comment type="similarity">
    <text evidence="1">Belongs to the PyrI family.</text>
</comment>
<reference key="1">
    <citation type="journal article" date="2011" name="J. Bacteriol.">
        <title>Comparative genomics of 28 Salmonella enterica isolates: evidence for CRISPR-mediated adaptive sublineage evolution.</title>
        <authorList>
            <person name="Fricke W.F."/>
            <person name="Mammel M.K."/>
            <person name="McDermott P.F."/>
            <person name="Tartera C."/>
            <person name="White D.G."/>
            <person name="Leclerc J.E."/>
            <person name="Ravel J."/>
            <person name="Cebula T.A."/>
        </authorList>
    </citation>
    <scope>NUCLEOTIDE SEQUENCE [LARGE SCALE GENOMIC DNA]</scope>
    <source>
        <strain>SL476</strain>
    </source>
</reference>
<dbReference type="EMBL" id="CP001120">
    <property type="protein sequence ID" value="ACF66679.1"/>
    <property type="molecule type" value="Genomic_DNA"/>
</dbReference>
<dbReference type="RefSeq" id="WP_000148570.1">
    <property type="nucleotide sequence ID" value="NC_011083.1"/>
</dbReference>
<dbReference type="SMR" id="B4TG40"/>
<dbReference type="KEGG" id="seh:SeHA_C4862"/>
<dbReference type="HOGENOM" id="CLU_128576_0_0_6"/>
<dbReference type="Proteomes" id="UP000001866">
    <property type="component" value="Chromosome"/>
</dbReference>
<dbReference type="GO" id="GO:0009347">
    <property type="term" value="C:aspartate carbamoyltransferase complex"/>
    <property type="evidence" value="ECO:0007669"/>
    <property type="project" value="InterPro"/>
</dbReference>
<dbReference type="GO" id="GO:0046872">
    <property type="term" value="F:metal ion binding"/>
    <property type="evidence" value="ECO:0007669"/>
    <property type="project" value="UniProtKB-KW"/>
</dbReference>
<dbReference type="GO" id="GO:0006207">
    <property type="term" value="P:'de novo' pyrimidine nucleobase biosynthetic process"/>
    <property type="evidence" value="ECO:0007669"/>
    <property type="project" value="InterPro"/>
</dbReference>
<dbReference type="GO" id="GO:0006221">
    <property type="term" value="P:pyrimidine nucleotide biosynthetic process"/>
    <property type="evidence" value="ECO:0007669"/>
    <property type="project" value="UniProtKB-UniRule"/>
</dbReference>
<dbReference type="FunFam" id="2.30.30.20:FF:000001">
    <property type="entry name" value="Aspartate carbamoyltransferase regulatory chain"/>
    <property type="match status" value="1"/>
</dbReference>
<dbReference type="FunFam" id="3.30.70.140:FF:000001">
    <property type="entry name" value="Aspartate carbamoyltransferase regulatory chain"/>
    <property type="match status" value="1"/>
</dbReference>
<dbReference type="Gene3D" id="2.30.30.20">
    <property type="entry name" value="Aspartate carbamoyltransferase regulatory subunit, C-terminal domain"/>
    <property type="match status" value="1"/>
</dbReference>
<dbReference type="Gene3D" id="3.30.70.140">
    <property type="entry name" value="Aspartate carbamoyltransferase regulatory subunit, N-terminal domain"/>
    <property type="match status" value="1"/>
</dbReference>
<dbReference type="HAMAP" id="MF_00002">
    <property type="entry name" value="Asp_carb_tr_reg"/>
    <property type="match status" value="1"/>
</dbReference>
<dbReference type="InterPro" id="IPR020545">
    <property type="entry name" value="Asp_carbamoyltransf_reg_N"/>
</dbReference>
<dbReference type="InterPro" id="IPR002801">
    <property type="entry name" value="Asp_carbamoylTrfase_reg"/>
</dbReference>
<dbReference type="InterPro" id="IPR020542">
    <property type="entry name" value="Asp_carbamoyltrfase_reg_C"/>
</dbReference>
<dbReference type="InterPro" id="IPR036792">
    <property type="entry name" value="Asp_carbatrfase_reg_C_sf"/>
</dbReference>
<dbReference type="InterPro" id="IPR036793">
    <property type="entry name" value="Asp_carbatrfase_reg_N_sf"/>
</dbReference>
<dbReference type="NCBIfam" id="TIGR00240">
    <property type="entry name" value="ATCase_reg"/>
    <property type="match status" value="1"/>
</dbReference>
<dbReference type="PANTHER" id="PTHR35805">
    <property type="entry name" value="ASPARTATE CARBAMOYLTRANSFERASE REGULATORY CHAIN"/>
    <property type="match status" value="1"/>
</dbReference>
<dbReference type="PANTHER" id="PTHR35805:SF1">
    <property type="entry name" value="ASPARTATE CARBAMOYLTRANSFERASE REGULATORY CHAIN"/>
    <property type="match status" value="1"/>
</dbReference>
<dbReference type="Pfam" id="PF01948">
    <property type="entry name" value="PyrI"/>
    <property type="match status" value="1"/>
</dbReference>
<dbReference type="Pfam" id="PF02748">
    <property type="entry name" value="PyrI_C"/>
    <property type="match status" value="1"/>
</dbReference>
<dbReference type="SUPFAM" id="SSF57825">
    <property type="entry name" value="Aspartate carbamoyltransferase, Regulatory-chain, C-terminal domain"/>
    <property type="match status" value="1"/>
</dbReference>
<dbReference type="SUPFAM" id="SSF54893">
    <property type="entry name" value="Aspartate carbamoyltransferase, Regulatory-chain, N-terminal domain"/>
    <property type="match status" value="1"/>
</dbReference>
<feature type="chain" id="PRO_1000088837" description="Aspartate carbamoyltransferase regulatory chain">
    <location>
        <begin position="1"/>
        <end position="153"/>
    </location>
</feature>
<feature type="binding site" evidence="1">
    <location>
        <position position="109"/>
    </location>
    <ligand>
        <name>Zn(2+)</name>
        <dbReference type="ChEBI" id="CHEBI:29105"/>
    </ligand>
</feature>
<feature type="binding site" evidence="1">
    <location>
        <position position="114"/>
    </location>
    <ligand>
        <name>Zn(2+)</name>
        <dbReference type="ChEBI" id="CHEBI:29105"/>
    </ligand>
</feature>
<feature type="binding site" evidence="1">
    <location>
        <position position="138"/>
    </location>
    <ligand>
        <name>Zn(2+)</name>
        <dbReference type="ChEBI" id="CHEBI:29105"/>
    </ligand>
</feature>
<feature type="binding site" evidence="1">
    <location>
        <position position="141"/>
    </location>
    <ligand>
        <name>Zn(2+)</name>
        <dbReference type="ChEBI" id="CHEBI:29105"/>
    </ligand>
</feature>
<proteinExistence type="inferred from homology"/>
<organism>
    <name type="scientific">Salmonella heidelberg (strain SL476)</name>
    <dbReference type="NCBI Taxonomy" id="454169"/>
    <lineage>
        <taxon>Bacteria</taxon>
        <taxon>Pseudomonadati</taxon>
        <taxon>Pseudomonadota</taxon>
        <taxon>Gammaproteobacteria</taxon>
        <taxon>Enterobacterales</taxon>
        <taxon>Enterobacteriaceae</taxon>
        <taxon>Salmonella</taxon>
    </lineage>
</organism>
<protein>
    <recommendedName>
        <fullName evidence="1">Aspartate carbamoyltransferase regulatory chain</fullName>
    </recommendedName>
</protein>
<accession>B4TG40</accession>
<sequence>MTHDNKLQVEAIKCGTVIDHIPAQVGFKLLSLFKLTETDQRITIGLNLPSGEMGRKDLIKIENTFLTEEQVNQLALYAPQATVNRIDNYDVVGKSRPSLPERINNVLVCPNSNCISHAEPVSSSFAVKKRANDIALKCKYCEKEFSHYVVLAN</sequence>
<evidence type="ECO:0000255" key="1">
    <source>
        <dbReference type="HAMAP-Rule" id="MF_00002"/>
    </source>
</evidence>
<gene>
    <name evidence="1" type="primary">pyrI</name>
    <name type="ordered locus">SeHA_C4862</name>
</gene>
<keyword id="KW-0479">Metal-binding</keyword>
<keyword id="KW-0665">Pyrimidine biosynthesis</keyword>
<keyword id="KW-0862">Zinc</keyword>